<organism>
    <name type="scientific">Cronobacter sakazakii (strain ATCC BAA-894)</name>
    <name type="common">Enterobacter sakazakii</name>
    <dbReference type="NCBI Taxonomy" id="290339"/>
    <lineage>
        <taxon>Bacteria</taxon>
        <taxon>Pseudomonadati</taxon>
        <taxon>Pseudomonadota</taxon>
        <taxon>Gammaproteobacteria</taxon>
        <taxon>Enterobacterales</taxon>
        <taxon>Enterobacteriaceae</taxon>
        <taxon>Cronobacter</taxon>
    </lineage>
</organism>
<accession>A7MPI3</accession>
<comment type="function">
    <text evidence="1">Protein S19 forms a complex with S13 that binds strongly to the 16S ribosomal RNA.</text>
</comment>
<comment type="similarity">
    <text evidence="1">Belongs to the universal ribosomal protein uS19 family.</text>
</comment>
<keyword id="KW-1185">Reference proteome</keyword>
<keyword id="KW-0687">Ribonucleoprotein</keyword>
<keyword id="KW-0689">Ribosomal protein</keyword>
<keyword id="KW-0694">RNA-binding</keyword>
<keyword id="KW-0699">rRNA-binding</keyword>
<evidence type="ECO:0000255" key="1">
    <source>
        <dbReference type="HAMAP-Rule" id="MF_00531"/>
    </source>
</evidence>
<evidence type="ECO:0000305" key="2"/>
<feature type="chain" id="PRO_1000051046" description="Small ribosomal subunit protein uS19">
    <location>
        <begin position="1"/>
        <end position="92"/>
    </location>
</feature>
<reference key="1">
    <citation type="journal article" date="2010" name="PLoS ONE">
        <title>Genome sequence of Cronobacter sakazakii BAA-894 and comparative genomic hybridization analysis with other Cronobacter species.</title>
        <authorList>
            <person name="Kucerova E."/>
            <person name="Clifton S.W."/>
            <person name="Xia X.Q."/>
            <person name="Long F."/>
            <person name="Porwollik S."/>
            <person name="Fulton L."/>
            <person name="Fronick C."/>
            <person name="Minx P."/>
            <person name="Kyung K."/>
            <person name="Warren W."/>
            <person name="Fulton R."/>
            <person name="Feng D."/>
            <person name="Wollam A."/>
            <person name="Shah N."/>
            <person name="Bhonagiri V."/>
            <person name="Nash W.E."/>
            <person name="Hallsworth-Pepin K."/>
            <person name="Wilson R.K."/>
            <person name="McClelland M."/>
            <person name="Forsythe S.J."/>
        </authorList>
    </citation>
    <scope>NUCLEOTIDE SEQUENCE [LARGE SCALE GENOMIC DNA]</scope>
    <source>
        <strain>ATCC BAA-894</strain>
    </source>
</reference>
<proteinExistence type="inferred from homology"/>
<gene>
    <name evidence="1" type="primary">rpsS</name>
    <name type="ordered locus">ESA_00008</name>
</gene>
<name>RS19_CROS8</name>
<sequence>MPRSLKKGPFIDLHLLKKVEKAVESGDKKPLRTWSRRSTIFPNMIGLTIAVHNGRQHVPVFVSDEMVGHKLGEFAPTRTYRGHAADKKAKKK</sequence>
<dbReference type="EMBL" id="CP000783">
    <property type="protein sequence ID" value="ABU75317.1"/>
    <property type="molecule type" value="Genomic_DNA"/>
</dbReference>
<dbReference type="RefSeq" id="WP_001138115.1">
    <property type="nucleotide sequence ID" value="NC_009778.1"/>
</dbReference>
<dbReference type="SMR" id="A7MPI3"/>
<dbReference type="GeneID" id="97603665"/>
<dbReference type="KEGG" id="esa:ESA_00008"/>
<dbReference type="HOGENOM" id="CLU_144911_0_1_6"/>
<dbReference type="Proteomes" id="UP000000260">
    <property type="component" value="Chromosome"/>
</dbReference>
<dbReference type="GO" id="GO:0005737">
    <property type="term" value="C:cytoplasm"/>
    <property type="evidence" value="ECO:0007669"/>
    <property type="project" value="UniProtKB-ARBA"/>
</dbReference>
<dbReference type="GO" id="GO:0015935">
    <property type="term" value="C:small ribosomal subunit"/>
    <property type="evidence" value="ECO:0007669"/>
    <property type="project" value="InterPro"/>
</dbReference>
<dbReference type="GO" id="GO:0019843">
    <property type="term" value="F:rRNA binding"/>
    <property type="evidence" value="ECO:0007669"/>
    <property type="project" value="UniProtKB-UniRule"/>
</dbReference>
<dbReference type="GO" id="GO:0003735">
    <property type="term" value="F:structural constituent of ribosome"/>
    <property type="evidence" value="ECO:0007669"/>
    <property type="project" value="InterPro"/>
</dbReference>
<dbReference type="GO" id="GO:0000028">
    <property type="term" value="P:ribosomal small subunit assembly"/>
    <property type="evidence" value="ECO:0007669"/>
    <property type="project" value="TreeGrafter"/>
</dbReference>
<dbReference type="GO" id="GO:0006412">
    <property type="term" value="P:translation"/>
    <property type="evidence" value="ECO:0007669"/>
    <property type="project" value="UniProtKB-UniRule"/>
</dbReference>
<dbReference type="FunFam" id="3.30.860.10:FF:000001">
    <property type="entry name" value="30S ribosomal protein S19"/>
    <property type="match status" value="1"/>
</dbReference>
<dbReference type="Gene3D" id="3.30.860.10">
    <property type="entry name" value="30s Ribosomal Protein S19, Chain A"/>
    <property type="match status" value="1"/>
</dbReference>
<dbReference type="HAMAP" id="MF_00531">
    <property type="entry name" value="Ribosomal_uS19"/>
    <property type="match status" value="1"/>
</dbReference>
<dbReference type="InterPro" id="IPR002222">
    <property type="entry name" value="Ribosomal_uS19"/>
</dbReference>
<dbReference type="InterPro" id="IPR005732">
    <property type="entry name" value="Ribosomal_uS19_bac-type"/>
</dbReference>
<dbReference type="InterPro" id="IPR020934">
    <property type="entry name" value="Ribosomal_uS19_CS"/>
</dbReference>
<dbReference type="InterPro" id="IPR023575">
    <property type="entry name" value="Ribosomal_uS19_SF"/>
</dbReference>
<dbReference type="NCBIfam" id="TIGR01050">
    <property type="entry name" value="rpsS_bact"/>
    <property type="match status" value="1"/>
</dbReference>
<dbReference type="PANTHER" id="PTHR11880">
    <property type="entry name" value="RIBOSOMAL PROTEIN S19P FAMILY MEMBER"/>
    <property type="match status" value="1"/>
</dbReference>
<dbReference type="PANTHER" id="PTHR11880:SF8">
    <property type="entry name" value="SMALL RIBOSOMAL SUBUNIT PROTEIN US19M"/>
    <property type="match status" value="1"/>
</dbReference>
<dbReference type="Pfam" id="PF00203">
    <property type="entry name" value="Ribosomal_S19"/>
    <property type="match status" value="1"/>
</dbReference>
<dbReference type="PIRSF" id="PIRSF002144">
    <property type="entry name" value="Ribosomal_S19"/>
    <property type="match status" value="1"/>
</dbReference>
<dbReference type="PRINTS" id="PR00975">
    <property type="entry name" value="RIBOSOMALS19"/>
</dbReference>
<dbReference type="SUPFAM" id="SSF54570">
    <property type="entry name" value="Ribosomal protein S19"/>
    <property type="match status" value="1"/>
</dbReference>
<dbReference type="PROSITE" id="PS00323">
    <property type="entry name" value="RIBOSOMAL_S19"/>
    <property type="match status" value="1"/>
</dbReference>
<protein>
    <recommendedName>
        <fullName evidence="1">Small ribosomal subunit protein uS19</fullName>
    </recommendedName>
    <alternativeName>
        <fullName evidence="2">30S ribosomal protein S19</fullName>
    </alternativeName>
</protein>